<accession>O26484</accession>
<name>EHAA_METTH</name>
<comment type="function">
    <text evidence="1">One of the integral membrane subunits of multisubunit membrane-bound [NiFe]-hydrogenase eha. Eha is predicted to form large electron transfer complex and might catalyze energy-driven reduction of low-potential redox carriers (By similarity).</text>
</comment>
<comment type="subunit">
    <text evidence="1">Putative multisubunit membrane-bound [NiFe]-hydrogenase eha is composed of at least 20 subunits.</text>
</comment>
<comment type="subcellular location">
    <subcellularLocation>
        <location evidence="3">Cell membrane</location>
        <topology evidence="3">Multi-pass membrane protein</topology>
    </subcellularLocation>
</comment>
<comment type="similarity">
    <text evidence="3">Belongs to the EhaA family.</text>
</comment>
<comment type="sequence caution" evidence="3">
    <conflict type="erroneous initiation">
        <sequence resource="EMBL-CDS" id="AAB84890"/>
    </conflict>
</comment>
<keyword id="KW-1003">Cell membrane</keyword>
<keyword id="KW-0472">Membrane</keyword>
<keyword id="KW-1185">Reference proteome</keyword>
<keyword id="KW-0812">Transmembrane</keyword>
<keyword id="KW-1133">Transmembrane helix</keyword>
<proteinExistence type="inferred from homology"/>
<organism>
    <name type="scientific">Methanothermobacter thermautotrophicus (strain ATCC 29096 / DSM 1053 / JCM 10044 / NBRC 100330 / Delta H)</name>
    <name type="common">Methanobacterium thermoautotrophicum</name>
    <dbReference type="NCBI Taxonomy" id="187420"/>
    <lineage>
        <taxon>Archaea</taxon>
        <taxon>Methanobacteriati</taxon>
        <taxon>Methanobacteriota</taxon>
        <taxon>Methanomada group</taxon>
        <taxon>Methanobacteria</taxon>
        <taxon>Methanobacteriales</taxon>
        <taxon>Methanobacteriaceae</taxon>
        <taxon>Methanothermobacter</taxon>
    </lineage>
</organism>
<evidence type="ECO:0000250" key="1"/>
<evidence type="ECO:0000255" key="2"/>
<evidence type="ECO:0000305" key="3"/>
<dbReference type="EMBL" id="AE000666">
    <property type="protein sequence ID" value="AAB84890.1"/>
    <property type="status" value="ALT_INIT"/>
    <property type="molecule type" value="Genomic_DNA"/>
</dbReference>
<dbReference type="PIR" id="G69149">
    <property type="entry name" value="G69149"/>
</dbReference>
<dbReference type="RefSeq" id="WP_048060803.1">
    <property type="nucleotide sequence ID" value="NC_000916.1"/>
</dbReference>
<dbReference type="FunCoup" id="O26484">
    <property type="interactions" value="3"/>
</dbReference>
<dbReference type="STRING" id="187420.MTH_384"/>
<dbReference type="PaxDb" id="187420-MTH_384"/>
<dbReference type="EnsemblBacteria" id="AAB84890">
    <property type="protein sequence ID" value="AAB84890"/>
    <property type="gene ID" value="MTH_384"/>
</dbReference>
<dbReference type="GeneID" id="1470345"/>
<dbReference type="KEGG" id="mth:MTH_384"/>
<dbReference type="HOGENOM" id="CLU_174516_0_0_2"/>
<dbReference type="InParanoid" id="O26484"/>
<dbReference type="Proteomes" id="UP000005223">
    <property type="component" value="Chromosome"/>
</dbReference>
<dbReference type="GO" id="GO:0005886">
    <property type="term" value="C:plasma membrane"/>
    <property type="evidence" value="ECO:0007669"/>
    <property type="project" value="UniProtKB-SubCell"/>
</dbReference>
<dbReference type="InterPro" id="IPR011306">
    <property type="entry name" value="Prd_NiFe_hyd_3_EhaA"/>
</dbReference>
<dbReference type="Pfam" id="PF17367">
    <property type="entry name" value="NiFe_hyd_3_EhaA"/>
    <property type="match status" value="1"/>
</dbReference>
<dbReference type="PIRSF" id="PIRSF005019">
    <property type="entry name" value="EhaA"/>
    <property type="match status" value="1"/>
</dbReference>
<sequence length="97" mass="10166">MIIHVTYLSGYLAAIISSIIVSAILGLPLTPERPARHSWTPSAIFPTPVIALGLTAISIKLGVTGIYGADLGAVAGVLSAIMTAYFLEDIFPRPEDS</sequence>
<reference key="1">
    <citation type="journal article" date="1997" name="J. Bacteriol.">
        <title>Complete genome sequence of Methanobacterium thermoautotrophicum deltaH: functional analysis and comparative genomics.</title>
        <authorList>
            <person name="Smith D.R."/>
            <person name="Doucette-Stamm L.A."/>
            <person name="Deloughery C."/>
            <person name="Lee H.-M."/>
            <person name="Dubois J."/>
            <person name="Aldredge T."/>
            <person name="Bashirzadeh R."/>
            <person name="Blakely D."/>
            <person name="Cook R."/>
            <person name="Gilbert K."/>
            <person name="Harrison D."/>
            <person name="Hoang L."/>
            <person name="Keagle P."/>
            <person name="Lumm W."/>
            <person name="Pothier B."/>
            <person name="Qiu D."/>
            <person name="Spadafora R."/>
            <person name="Vicare R."/>
            <person name="Wang Y."/>
            <person name="Wierzbowski J."/>
            <person name="Gibson R."/>
            <person name="Jiwani N."/>
            <person name="Caruso A."/>
            <person name="Bush D."/>
            <person name="Safer H."/>
            <person name="Patwell D."/>
            <person name="Prabhakar S."/>
            <person name="McDougall S."/>
            <person name="Shimer G."/>
            <person name="Goyal A."/>
            <person name="Pietrovski S."/>
            <person name="Church G.M."/>
            <person name="Daniels C.J."/>
            <person name="Mao J.-I."/>
            <person name="Rice P."/>
            <person name="Noelling J."/>
            <person name="Reeve J.N."/>
        </authorList>
    </citation>
    <scope>NUCLEOTIDE SEQUENCE [LARGE SCALE GENOMIC DNA]</scope>
    <source>
        <strain>ATCC 29096 / DSM 1053 / JCM 10044 / NBRC 100330 / Delta H</strain>
    </source>
</reference>
<feature type="chain" id="PRO_0000138110" description="Probable [NiFe]-hydrogenase-type-3 Eha complex membrane subunit A">
    <location>
        <begin position="1"/>
        <end position="97"/>
    </location>
</feature>
<feature type="transmembrane region" description="Helical" evidence="2">
    <location>
        <begin position="7"/>
        <end position="27"/>
    </location>
</feature>
<feature type="transmembrane region" description="Helical" evidence="2">
    <location>
        <begin position="43"/>
        <end position="63"/>
    </location>
</feature>
<feature type="transmembrane region" description="Helical" evidence="2">
    <location>
        <begin position="71"/>
        <end position="91"/>
    </location>
</feature>
<protein>
    <recommendedName>
        <fullName>Probable [NiFe]-hydrogenase-type-3 Eha complex membrane subunit A</fullName>
    </recommendedName>
</protein>
<gene>
    <name type="primary">ehaA</name>
    <name type="ordered locus">MTH_384</name>
</gene>